<protein>
    <recommendedName>
        <fullName evidence="1">Ribosomal RNA small subunit methyltransferase A</fullName>
        <ecNumber evidence="1">2.1.1.182</ecNumber>
    </recommendedName>
    <alternativeName>
        <fullName evidence="1">16S rRNA (adenine(1518)-N(6)/adenine(1519)-N(6))-dimethyltransferase</fullName>
    </alternativeName>
    <alternativeName>
        <fullName evidence="1">16S rRNA dimethyladenosine transferase</fullName>
    </alternativeName>
    <alternativeName>
        <fullName evidence="1">16S rRNA dimethylase</fullName>
    </alternativeName>
    <alternativeName>
        <fullName evidence="1">S-adenosylmethionine-6-N', N'-adenosyl(rRNA) dimethyltransferase</fullName>
    </alternativeName>
</protein>
<name>RSMA_HYDCU</name>
<evidence type="ECO:0000255" key="1">
    <source>
        <dbReference type="HAMAP-Rule" id="MF_00607"/>
    </source>
</evidence>
<gene>
    <name evidence="1" type="primary">rsmA</name>
    <name evidence="1" type="synonym">ksgA</name>
    <name type="ordered locus">Tcr_1657</name>
</gene>
<dbReference type="EC" id="2.1.1.182" evidence="1"/>
<dbReference type="EMBL" id="CP000109">
    <property type="protein sequence ID" value="ABB42249.1"/>
    <property type="molecule type" value="Genomic_DNA"/>
</dbReference>
<dbReference type="SMR" id="Q31F24"/>
<dbReference type="STRING" id="317025.Tcr_1657"/>
<dbReference type="KEGG" id="tcx:Tcr_1657"/>
<dbReference type="eggNOG" id="COG0030">
    <property type="taxonomic scope" value="Bacteria"/>
</dbReference>
<dbReference type="HOGENOM" id="CLU_041220_0_1_6"/>
<dbReference type="OrthoDB" id="9814755at2"/>
<dbReference type="GO" id="GO:0005829">
    <property type="term" value="C:cytosol"/>
    <property type="evidence" value="ECO:0007669"/>
    <property type="project" value="TreeGrafter"/>
</dbReference>
<dbReference type="GO" id="GO:0052908">
    <property type="term" value="F:16S rRNA (adenine(1518)-N(6)/adenine(1519)-N(6))-dimethyltransferase activity"/>
    <property type="evidence" value="ECO:0007669"/>
    <property type="project" value="UniProtKB-EC"/>
</dbReference>
<dbReference type="GO" id="GO:0003723">
    <property type="term" value="F:RNA binding"/>
    <property type="evidence" value="ECO:0007669"/>
    <property type="project" value="UniProtKB-KW"/>
</dbReference>
<dbReference type="FunFam" id="1.10.8.100:FF:000001">
    <property type="entry name" value="Ribosomal RNA small subunit methyltransferase A"/>
    <property type="match status" value="1"/>
</dbReference>
<dbReference type="Gene3D" id="1.10.8.100">
    <property type="entry name" value="Ribosomal RNA adenine dimethylase-like, domain 2"/>
    <property type="match status" value="1"/>
</dbReference>
<dbReference type="Gene3D" id="3.40.50.150">
    <property type="entry name" value="Vaccinia Virus protein VP39"/>
    <property type="match status" value="1"/>
</dbReference>
<dbReference type="HAMAP" id="MF_00607">
    <property type="entry name" value="16SrRNA_methyltr_A"/>
    <property type="match status" value="1"/>
</dbReference>
<dbReference type="InterPro" id="IPR001737">
    <property type="entry name" value="KsgA/Erm"/>
</dbReference>
<dbReference type="InterPro" id="IPR023165">
    <property type="entry name" value="rRNA_Ade_diMease-like_C"/>
</dbReference>
<dbReference type="InterPro" id="IPR020598">
    <property type="entry name" value="rRNA_Ade_methylase_Trfase_N"/>
</dbReference>
<dbReference type="InterPro" id="IPR011530">
    <property type="entry name" value="rRNA_adenine_dimethylase"/>
</dbReference>
<dbReference type="InterPro" id="IPR029063">
    <property type="entry name" value="SAM-dependent_MTases_sf"/>
</dbReference>
<dbReference type="NCBIfam" id="TIGR00755">
    <property type="entry name" value="ksgA"/>
    <property type="match status" value="1"/>
</dbReference>
<dbReference type="PANTHER" id="PTHR11727">
    <property type="entry name" value="DIMETHYLADENOSINE TRANSFERASE"/>
    <property type="match status" value="1"/>
</dbReference>
<dbReference type="PANTHER" id="PTHR11727:SF7">
    <property type="entry name" value="DIMETHYLADENOSINE TRANSFERASE-RELATED"/>
    <property type="match status" value="1"/>
</dbReference>
<dbReference type="Pfam" id="PF00398">
    <property type="entry name" value="RrnaAD"/>
    <property type="match status" value="1"/>
</dbReference>
<dbReference type="SMART" id="SM00650">
    <property type="entry name" value="rADc"/>
    <property type="match status" value="1"/>
</dbReference>
<dbReference type="SUPFAM" id="SSF53335">
    <property type="entry name" value="S-adenosyl-L-methionine-dependent methyltransferases"/>
    <property type="match status" value="1"/>
</dbReference>
<dbReference type="PROSITE" id="PS51689">
    <property type="entry name" value="SAM_RNA_A_N6_MT"/>
    <property type="match status" value="1"/>
</dbReference>
<accession>Q31F24</accession>
<feature type="chain" id="PRO_0000257369" description="Ribosomal RNA small subunit methyltransferase A">
    <location>
        <begin position="1"/>
        <end position="266"/>
    </location>
</feature>
<feature type="binding site" evidence="1">
    <location>
        <position position="13"/>
    </location>
    <ligand>
        <name>S-adenosyl-L-methionine</name>
        <dbReference type="ChEBI" id="CHEBI:59789"/>
    </ligand>
</feature>
<feature type="binding site" evidence="1">
    <location>
        <position position="15"/>
    </location>
    <ligand>
        <name>S-adenosyl-L-methionine</name>
        <dbReference type="ChEBI" id="CHEBI:59789"/>
    </ligand>
</feature>
<feature type="binding site" evidence="1">
    <location>
        <position position="40"/>
    </location>
    <ligand>
        <name>S-adenosyl-L-methionine</name>
        <dbReference type="ChEBI" id="CHEBI:59789"/>
    </ligand>
</feature>
<feature type="binding site" evidence="1">
    <location>
        <position position="61"/>
    </location>
    <ligand>
        <name>S-adenosyl-L-methionine</name>
        <dbReference type="ChEBI" id="CHEBI:59789"/>
    </ligand>
</feature>
<feature type="binding site" evidence="1">
    <location>
        <position position="86"/>
    </location>
    <ligand>
        <name>S-adenosyl-L-methionine</name>
        <dbReference type="ChEBI" id="CHEBI:59789"/>
    </ligand>
</feature>
<feature type="binding site" evidence="1">
    <location>
        <position position="110"/>
    </location>
    <ligand>
        <name>S-adenosyl-L-methionine</name>
        <dbReference type="ChEBI" id="CHEBI:59789"/>
    </ligand>
</feature>
<reference key="1">
    <citation type="journal article" date="2006" name="PLoS Biol.">
        <title>The genome of deep-sea vent chemolithoautotroph Thiomicrospira crunogena XCL-2.</title>
        <authorList>
            <person name="Scott K.M."/>
            <person name="Sievert S.M."/>
            <person name="Abril F.N."/>
            <person name="Ball L.A."/>
            <person name="Barrett C.J."/>
            <person name="Blake R.A."/>
            <person name="Boller A.J."/>
            <person name="Chain P.S.G."/>
            <person name="Clark J.A."/>
            <person name="Davis C.R."/>
            <person name="Detter C."/>
            <person name="Do K.F."/>
            <person name="Dobrinski K.P."/>
            <person name="Faza B.I."/>
            <person name="Fitzpatrick K.A."/>
            <person name="Freyermuth S.K."/>
            <person name="Harmer T.L."/>
            <person name="Hauser L.J."/>
            <person name="Huegler M."/>
            <person name="Kerfeld C.A."/>
            <person name="Klotz M.G."/>
            <person name="Kong W.W."/>
            <person name="Land M."/>
            <person name="Lapidus A."/>
            <person name="Larimer F.W."/>
            <person name="Longo D.L."/>
            <person name="Lucas S."/>
            <person name="Malfatti S.A."/>
            <person name="Massey S.E."/>
            <person name="Martin D.D."/>
            <person name="McCuddin Z."/>
            <person name="Meyer F."/>
            <person name="Moore J.L."/>
            <person name="Ocampo L.H. Jr."/>
            <person name="Paul J.H."/>
            <person name="Paulsen I.T."/>
            <person name="Reep D.K."/>
            <person name="Ren Q."/>
            <person name="Ross R.L."/>
            <person name="Sato P.Y."/>
            <person name="Thomas P."/>
            <person name="Tinkham L.E."/>
            <person name="Zeruth G.T."/>
        </authorList>
    </citation>
    <scope>NUCLEOTIDE SEQUENCE [LARGE SCALE GENOMIC DNA]</scope>
    <source>
        <strain>DSM 25203 / XCL-2</strain>
    </source>
</reference>
<comment type="function">
    <text evidence="1">Specifically dimethylates two adjacent adenosines (A1518 and A1519) in the loop of a conserved hairpin near the 3'-end of 16S rRNA in the 30S particle. May play a critical role in biogenesis of 30S subunits.</text>
</comment>
<comment type="catalytic activity">
    <reaction evidence="1">
        <text>adenosine(1518)/adenosine(1519) in 16S rRNA + 4 S-adenosyl-L-methionine = N(6)-dimethyladenosine(1518)/N(6)-dimethyladenosine(1519) in 16S rRNA + 4 S-adenosyl-L-homocysteine + 4 H(+)</text>
        <dbReference type="Rhea" id="RHEA:19609"/>
        <dbReference type="Rhea" id="RHEA-COMP:10232"/>
        <dbReference type="Rhea" id="RHEA-COMP:10233"/>
        <dbReference type="ChEBI" id="CHEBI:15378"/>
        <dbReference type="ChEBI" id="CHEBI:57856"/>
        <dbReference type="ChEBI" id="CHEBI:59789"/>
        <dbReference type="ChEBI" id="CHEBI:74411"/>
        <dbReference type="ChEBI" id="CHEBI:74493"/>
        <dbReference type="EC" id="2.1.1.182"/>
    </reaction>
</comment>
<comment type="subcellular location">
    <subcellularLocation>
        <location evidence="1">Cytoplasm</location>
    </subcellularLocation>
</comment>
<comment type="similarity">
    <text evidence="1">Belongs to the class I-like SAM-binding methyltransferase superfamily. rRNA adenine N(6)-methyltransferase family. RsmA subfamily.</text>
</comment>
<organism>
    <name type="scientific">Hydrogenovibrio crunogenus (strain DSM 25203 / XCL-2)</name>
    <name type="common">Thiomicrospira crunogena</name>
    <dbReference type="NCBI Taxonomy" id="317025"/>
    <lineage>
        <taxon>Bacteria</taxon>
        <taxon>Pseudomonadati</taxon>
        <taxon>Pseudomonadota</taxon>
        <taxon>Gammaproteobacteria</taxon>
        <taxon>Thiotrichales</taxon>
        <taxon>Piscirickettsiaceae</taxon>
        <taxon>Hydrogenovibrio</taxon>
    </lineage>
</organism>
<sequence>MAKHQHKKRFGQNFLNNDRIIQQIVAAIAPKPDQHLVEIGPGEAALTGPLLDIVKKLDIIEIDNDLIGPLTKRFSHNPAFHLHHTDALLFDYSQLLEAETETPSLRIVGNLPYNISSPLLFHLLKYARYIQDMHFMLQKEVVERITAQPGVKAYGRLSVMIQYTCETEYLLTVGPENFTPPPKVDSAIVRLRPFEKRPFQAIDDKDFAKLVKQAFSQKRKTLRNNLKGFLNDEQIEACGLDPSVRAEKVPVEAFVLLSNLYHKDKA</sequence>
<keyword id="KW-0963">Cytoplasm</keyword>
<keyword id="KW-0489">Methyltransferase</keyword>
<keyword id="KW-0694">RNA-binding</keyword>
<keyword id="KW-0698">rRNA processing</keyword>
<keyword id="KW-0949">S-adenosyl-L-methionine</keyword>
<keyword id="KW-0808">Transferase</keyword>
<proteinExistence type="inferred from homology"/>